<proteinExistence type="inferred from homology"/>
<sequence length="257" mass="29011">MEIERLNALSDNYIFLLYDPAQKIAAVVDPAEPEPVFRRLEALQVDLVAIFNTHHHGDHVGANQALINRYPHLCVYGGKEDRGRIPGQQLFLEEGDRVEFAGRWAEVFFVPGHTRAHIAYYFPPVNPGDYGELFCGDTLFSGGCGRLFEGTPGQMVASLTKLRSLPDQTRVWCAHEYTLNNLKFALTVDPNNAALQQRYREVEKHRAEDLPTIPAILGTEKLTNPFLRWDSPALAMTMDSSEPVQVFARLRGKKDNF</sequence>
<gene>
    <name evidence="1" type="primary">gloB</name>
    <name type="ordered locus">MAE_49310</name>
</gene>
<feature type="chain" id="PRO_1000087284" description="Hydroxyacylglutathione hydrolase">
    <location>
        <begin position="1"/>
        <end position="257"/>
    </location>
</feature>
<feature type="binding site" evidence="1">
    <location>
        <position position="54"/>
    </location>
    <ligand>
        <name>Zn(2+)</name>
        <dbReference type="ChEBI" id="CHEBI:29105"/>
        <label>1</label>
    </ligand>
</feature>
<feature type="binding site" evidence="1">
    <location>
        <position position="56"/>
    </location>
    <ligand>
        <name>Zn(2+)</name>
        <dbReference type="ChEBI" id="CHEBI:29105"/>
        <label>1</label>
    </ligand>
</feature>
<feature type="binding site" evidence="1">
    <location>
        <position position="58"/>
    </location>
    <ligand>
        <name>Zn(2+)</name>
        <dbReference type="ChEBI" id="CHEBI:29105"/>
        <label>2</label>
    </ligand>
</feature>
<feature type="binding site" evidence="1">
    <location>
        <position position="59"/>
    </location>
    <ligand>
        <name>Zn(2+)</name>
        <dbReference type="ChEBI" id="CHEBI:29105"/>
        <label>2</label>
    </ligand>
</feature>
<feature type="binding site" evidence="1">
    <location>
        <position position="113"/>
    </location>
    <ligand>
        <name>Zn(2+)</name>
        <dbReference type="ChEBI" id="CHEBI:29105"/>
        <label>1</label>
    </ligand>
</feature>
<feature type="binding site" evidence="1">
    <location>
        <position position="137"/>
    </location>
    <ligand>
        <name>Zn(2+)</name>
        <dbReference type="ChEBI" id="CHEBI:29105"/>
        <label>1</label>
    </ligand>
</feature>
<feature type="binding site" evidence="1">
    <location>
        <position position="137"/>
    </location>
    <ligand>
        <name>Zn(2+)</name>
        <dbReference type="ChEBI" id="CHEBI:29105"/>
        <label>2</label>
    </ligand>
</feature>
<feature type="binding site" evidence="1">
    <location>
        <position position="175"/>
    </location>
    <ligand>
        <name>Zn(2+)</name>
        <dbReference type="ChEBI" id="CHEBI:29105"/>
        <label>2</label>
    </ligand>
</feature>
<protein>
    <recommendedName>
        <fullName evidence="1">Hydroxyacylglutathione hydrolase</fullName>
        <ecNumber evidence="1">3.1.2.6</ecNumber>
    </recommendedName>
    <alternativeName>
        <fullName evidence="1">Glyoxalase II</fullName>
        <shortName evidence="1">Glx II</shortName>
    </alternativeName>
</protein>
<name>GLO2_MICAN</name>
<keyword id="KW-0378">Hydrolase</keyword>
<keyword id="KW-0479">Metal-binding</keyword>
<keyword id="KW-0862">Zinc</keyword>
<evidence type="ECO:0000255" key="1">
    <source>
        <dbReference type="HAMAP-Rule" id="MF_01374"/>
    </source>
</evidence>
<organism>
    <name type="scientific">Microcystis aeruginosa (strain NIES-843 / IAM M-2473)</name>
    <dbReference type="NCBI Taxonomy" id="449447"/>
    <lineage>
        <taxon>Bacteria</taxon>
        <taxon>Bacillati</taxon>
        <taxon>Cyanobacteriota</taxon>
        <taxon>Cyanophyceae</taxon>
        <taxon>Oscillatoriophycideae</taxon>
        <taxon>Chroococcales</taxon>
        <taxon>Microcystaceae</taxon>
        <taxon>Microcystis</taxon>
    </lineage>
</organism>
<reference key="1">
    <citation type="journal article" date="2007" name="DNA Res.">
        <title>Complete genomic structure of the bloom-forming toxic cyanobacterium Microcystis aeruginosa NIES-843.</title>
        <authorList>
            <person name="Kaneko T."/>
            <person name="Nakajima N."/>
            <person name="Okamoto S."/>
            <person name="Suzuki I."/>
            <person name="Tanabe Y."/>
            <person name="Tamaoki M."/>
            <person name="Nakamura Y."/>
            <person name="Kasai F."/>
            <person name="Watanabe A."/>
            <person name="Kawashima K."/>
            <person name="Kishida Y."/>
            <person name="Ono A."/>
            <person name="Shimizu Y."/>
            <person name="Takahashi C."/>
            <person name="Minami C."/>
            <person name="Fujishiro T."/>
            <person name="Kohara M."/>
            <person name="Katoh M."/>
            <person name="Nakazaki N."/>
            <person name="Nakayama S."/>
            <person name="Yamada M."/>
            <person name="Tabata S."/>
            <person name="Watanabe M.M."/>
        </authorList>
    </citation>
    <scope>NUCLEOTIDE SEQUENCE [LARGE SCALE GENOMIC DNA]</scope>
    <source>
        <strain>NIES-843 / IAM M-247</strain>
    </source>
</reference>
<comment type="function">
    <text evidence="1">Thiolesterase that catalyzes the hydrolysis of S-D-lactoyl-glutathione to form glutathione and D-lactic acid.</text>
</comment>
<comment type="catalytic activity">
    <reaction evidence="1">
        <text>an S-(2-hydroxyacyl)glutathione + H2O = a 2-hydroxy carboxylate + glutathione + H(+)</text>
        <dbReference type="Rhea" id="RHEA:21864"/>
        <dbReference type="ChEBI" id="CHEBI:15377"/>
        <dbReference type="ChEBI" id="CHEBI:15378"/>
        <dbReference type="ChEBI" id="CHEBI:57925"/>
        <dbReference type="ChEBI" id="CHEBI:58896"/>
        <dbReference type="ChEBI" id="CHEBI:71261"/>
        <dbReference type="EC" id="3.1.2.6"/>
    </reaction>
</comment>
<comment type="cofactor">
    <cofactor evidence="1">
        <name>Zn(2+)</name>
        <dbReference type="ChEBI" id="CHEBI:29105"/>
    </cofactor>
    <text evidence="1">Binds 2 Zn(2+) ions per subunit.</text>
</comment>
<comment type="pathway">
    <text evidence="1">Secondary metabolite metabolism; methylglyoxal degradation; (R)-lactate from methylglyoxal: step 2/2.</text>
</comment>
<comment type="subunit">
    <text evidence="1">Monomer.</text>
</comment>
<comment type="similarity">
    <text evidence="1">Belongs to the metallo-beta-lactamase superfamily. Glyoxalase II family.</text>
</comment>
<dbReference type="EC" id="3.1.2.6" evidence="1"/>
<dbReference type="EMBL" id="AP009552">
    <property type="protein sequence ID" value="BAG04753.1"/>
    <property type="molecule type" value="Genomic_DNA"/>
</dbReference>
<dbReference type="RefSeq" id="WP_012267399.1">
    <property type="nucleotide sequence ID" value="NC_010296.1"/>
</dbReference>
<dbReference type="SMR" id="B0JW10"/>
<dbReference type="STRING" id="449447.MAE_49310"/>
<dbReference type="PaxDb" id="449447-MAE_49310"/>
<dbReference type="EnsemblBacteria" id="BAG04753">
    <property type="protein sequence ID" value="BAG04753"/>
    <property type="gene ID" value="MAE_49310"/>
</dbReference>
<dbReference type="KEGG" id="mar:MAE_49310"/>
<dbReference type="PATRIC" id="fig|449447.4.peg.4487"/>
<dbReference type="eggNOG" id="COG0491">
    <property type="taxonomic scope" value="Bacteria"/>
</dbReference>
<dbReference type="HOGENOM" id="CLU_030571_4_1_3"/>
<dbReference type="BioCyc" id="MAER449447:MAE_RS21390-MONOMER"/>
<dbReference type="UniPathway" id="UPA00619">
    <property type="reaction ID" value="UER00676"/>
</dbReference>
<dbReference type="Proteomes" id="UP000001510">
    <property type="component" value="Chromosome"/>
</dbReference>
<dbReference type="GO" id="GO:0004416">
    <property type="term" value="F:hydroxyacylglutathione hydrolase activity"/>
    <property type="evidence" value="ECO:0007669"/>
    <property type="project" value="UniProtKB-UniRule"/>
</dbReference>
<dbReference type="GO" id="GO:0046872">
    <property type="term" value="F:metal ion binding"/>
    <property type="evidence" value="ECO:0007669"/>
    <property type="project" value="UniProtKB-KW"/>
</dbReference>
<dbReference type="GO" id="GO:0019243">
    <property type="term" value="P:methylglyoxal catabolic process to D-lactate via S-lactoyl-glutathione"/>
    <property type="evidence" value="ECO:0007669"/>
    <property type="project" value="InterPro"/>
</dbReference>
<dbReference type="CDD" id="cd07723">
    <property type="entry name" value="hydroxyacylglutathione_hydrolase_MBL-fold"/>
    <property type="match status" value="1"/>
</dbReference>
<dbReference type="Gene3D" id="3.60.15.10">
    <property type="entry name" value="Ribonuclease Z/Hydroxyacylglutathione hydrolase-like"/>
    <property type="match status" value="1"/>
</dbReference>
<dbReference type="HAMAP" id="MF_01374">
    <property type="entry name" value="Glyoxalase_2"/>
    <property type="match status" value="1"/>
</dbReference>
<dbReference type="InterPro" id="IPR035680">
    <property type="entry name" value="Clx_II_MBL"/>
</dbReference>
<dbReference type="InterPro" id="IPR050110">
    <property type="entry name" value="Glyoxalase_II_hydrolase"/>
</dbReference>
<dbReference type="InterPro" id="IPR032282">
    <property type="entry name" value="HAGH_C"/>
</dbReference>
<dbReference type="InterPro" id="IPR017782">
    <property type="entry name" value="Hydroxyacylglutathione_Hdrlase"/>
</dbReference>
<dbReference type="InterPro" id="IPR001279">
    <property type="entry name" value="Metallo-B-lactamas"/>
</dbReference>
<dbReference type="InterPro" id="IPR036866">
    <property type="entry name" value="RibonucZ/Hydroxyglut_hydro"/>
</dbReference>
<dbReference type="NCBIfam" id="TIGR03413">
    <property type="entry name" value="GSH_gloB"/>
    <property type="match status" value="1"/>
</dbReference>
<dbReference type="PANTHER" id="PTHR43705">
    <property type="entry name" value="HYDROXYACYLGLUTATHIONE HYDROLASE"/>
    <property type="match status" value="1"/>
</dbReference>
<dbReference type="PANTHER" id="PTHR43705:SF1">
    <property type="entry name" value="HYDROXYACYLGLUTATHIONE HYDROLASE GLOB"/>
    <property type="match status" value="1"/>
</dbReference>
<dbReference type="Pfam" id="PF16123">
    <property type="entry name" value="HAGH_C"/>
    <property type="match status" value="1"/>
</dbReference>
<dbReference type="Pfam" id="PF00753">
    <property type="entry name" value="Lactamase_B"/>
    <property type="match status" value="1"/>
</dbReference>
<dbReference type="PIRSF" id="PIRSF005457">
    <property type="entry name" value="Glx"/>
    <property type="match status" value="1"/>
</dbReference>
<dbReference type="SMART" id="SM00849">
    <property type="entry name" value="Lactamase_B"/>
    <property type="match status" value="1"/>
</dbReference>
<dbReference type="SUPFAM" id="SSF56281">
    <property type="entry name" value="Metallo-hydrolase/oxidoreductase"/>
    <property type="match status" value="1"/>
</dbReference>
<accession>B0JW10</accession>